<proteinExistence type="inferred from homology"/>
<reference key="1">
    <citation type="journal article" date="2001" name="Genome Res.">
        <title>The complete genome sequence of the lactic acid bacterium Lactococcus lactis ssp. lactis IL1403.</title>
        <authorList>
            <person name="Bolotin A."/>
            <person name="Wincker P."/>
            <person name="Mauger S."/>
            <person name="Jaillon O."/>
            <person name="Malarme K."/>
            <person name="Weissenbach J."/>
            <person name="Ehrlich S.D."/>
            <person name="Sorokin A."/>
        </authorList>
    </citation>
    <scope>NUCLEOTIDE SEQUENCE [LARGE SCALE GENOMIC DNA]</scope>
    <source>
        <strain>IL1403</strain>
    </source>
</reference>
<sequence length="58" mass="7018">MSKTLVRKNESLDDALRRFKRSVTKAGTLQELRKREHYEKPSVKRKRKSEAARKRKKY</sequence>
<feature type="chain" id="PRO_0000178345" description="Small ribosomal subunit protein bS21">
    <location>
        <begin position="1"/>
        <end position="58"/>
    </location>
</feature>
<feature type="region of interest" description="Disordered" evidence="1">
    <location>
        <begin position="27"/>
        <end position="58"/>
    </location>
</feature>
<feature type="compositionally biased region" description="Basic and acidic residues" evidence="1">
    <location>
        <begin position="31"/>
        <end position="42"/>
    </location>
</feature>
<feature type="compositionally biased region" description="Basic residues" evidence="1">
    <location>
        <begin position="43"/>
        <end position="58"/>
    </location>
</feature>
<dbReference type="EMBL" id="AE005176">
    <property type="protein sequence ID" value="AAK04338.1"/>
    <property type="molecule type" value="Genomic_DNA"/>
</dbReference>
<dbReference type="PIR" id="H86654">
    <property type="entry name" value="H86654"/>
</dbReference>
<dbReference type="RefSeq" id="NP_266396.1">
    <property type="nucleotide sequence ID" value="NC_002662.1"/>
</dbReference>
<dbReference type="RefSeq" id="WP_003129844.1">
    <property type="nucleotide sequence ID" value="NC_002662.1"/>
</dbReference>
<dbReference type="SMR" id="Q9CIW6"/>
<dbReference type="PaxDb" id="272623-L0398"/>
<dbReference type="EnsemblBacteria" id="AAK04338">
    <property type="protein sequence ID" value="AAK04338"/>
    <property type="gene ID" value="L0398"/>
</dbReference>
<dbReference type="GeneID" id="89632381"/>
<dbReference type="KEGG" id="lla:L0398"/>
<dbReference type="PATRIC" id="fig|272623.7.peg.264"/>
<dbReference type="eggNOG" id="COG0828">
    <property type="taxonomic scope" value="Bacteria"/>
</dbReference>
<dbReference type="HOGENOM" id="CLU_159258_3_2_9"/>
<dbReference type="OrthoDB" id="9799244at2"/>
<dbReference type="Proteomes" id="UP000002196">
    <property type="component" value="Chromosome"/>
</dbReference>
<dbReference type="GO" id="GO:1990904">
    <property type="term" value="C:ribonucleoprotein complex"/>
    <property type="evidence" value="ECO:0007669"/>
    <property type="project" value="UniProtKB-KW"/>
</dbReference>
<dbReference type="GO" id="GO:0005840">
    <property type="term" value="C:ribosome"/>
    <property type="evidence" value="ECO:0007669"/>
    <property type="project" value="UniProtKB-KW"/>
</dbReference>
<dbReference type="GO" id="GO:0003735">
    <property type="term" value="F:structural constituent of ribosome"/>
    <property type="evidence" value="ECO:0007669"/>
    <property type="project" value="InterPro"/>
</dbReference>
<dbReference type="GO" id="GO:0006412">
    <property type="term" value="P:translation"/>
    <property type="evidence" value="ECO:0007669"/>
    <property type="project" value="UniProtKB-UniRule"/>
</dbReference>
<dbReference type="Gene3D" id="1.20.5.1150">
    <property type="entry name" value="Ribosomal protein S8"/>
    <property type="match status" value="1"/>
</dbReference>
<dbReference type="HAMAP" id="MF_00358">
    <property type="entry name" value="Ribosomal_bS21"/>
    <property type="match status" value="1"/>
</dbReference>
<dbReference type="InterPro" id="IPR001911">
    <property type="entry name" value="Ribosomal_bS21"/>
</dbReference>
<dbReference type="InterPro" id="IPR018278">
    <property type="entry name" value="Ribosomal_bS21_CS"/>
</dbReference>
<dbReference type="InterPro" id="IPR038380">
    <property type="entry name" value="Ribosomal_bS21_sf"/>
</dbReference>
<dbReference type="NCBIfam" id="TIGR00030">
    <property type="entry name" value="S21p"/>
    <property type="match status" value="1"/>
</dbReference>
<dbReference type="PANTHER" id="PTHR21109">
    <property type="entry name" value="MITOCHONDRIAL 28S RIBOSOMAL PROTEIN S21"/>
    <property type="match status" value="1"/>
</dbReference>
<dbReference type="PANTHER" id="PTHR21109:SF22">
    <property type="entry name" value="SMALL RIBOSOMAL SUBUNIT PROTEIN BS21"/>
    <property type="match status" value="1"/>
</dbReference>
<dbReference type="Pfam" id="PF01165">
    <property type="entry name" value="Ribosomal_S21"/>
    <property type="match status" value="1"/>
</dbReference>
<dbReference type="PRINTS" id="PR00976">
    <property type="entry name" value="RIBOSOMALS21"/>
</dbReference>
<dbReference type="PROSITE" id="PS01181">
    <property type="entry name" value="RIBOSOMAL_S21"/>
    <property type="match status" value="1"/>
</dbReference>
<keyword id="KW-1185">Reference proteome</keyword>
<keyword id="KW-0687">Ribonucleoprotein</keyword>
<keyword id="KW-0689">Ribosomal protein</keyword>
<name>RS21_LACLA</name>
<accession>Q9CIW6</accession>
<evidence type="ECO:0000256" key="1">
    <source>
        <dbReference type="SAM" id="MobiDB-lite"/>
    </source>
</evidence>
<evidence type="ECO:0000305" key="2"/>
<comment type="similarity">
    <text evidence="2">Belongs to the bacterial ribosomal protein bS21 family.</text>
</comment>
<protein>
    <recommendedName>
        <fullName evidence="2">Small ribosomal subunit protein bS21</fullName>
    </recommendedName>
    <alternativeName>
        <fullName>30S ribosomal protein S21</fullName>
    </alternativeName>
</protein>
<organism>
    <name type="scientific">Lactococcus lactis subsp. lactis (strain IL1403)</name>
    <name type="common">Streptococcus lactis</name>
    <dbReference type="NCBI Taxonomy" id="272623"/>
    <lineage>
        <taxon>Bacteria</taxon>
        <taxon>Bacillati</taxon>
        <taxon>Bacillota</taxon>
        <taxon>Bacilli</taxon>
        <taxon>Lactobacillales</taxon>
        <taxon>Streptococcaceae</taxon>
        <taxon>Lactococcus</taxon>
    </lineage>
</organism>
<gene>
    <name type="primary">rpsU</name>
    <name type="ordered locus">LL0240</name>
    <name type="ORF">L0398</name>
</gene>